<reference key="1">
    <citation type="journal article" date="2003" name="Proc. Natl. Acad. Sci. U.S.A.">
        <title>The complete genome sequence of Chromobacterium violaceum reveals remarkable and exploitable bacterial adaptability.</title>
        <authorList>
            <person name="Vasconcelos A.T.R."/>
            <person name="de Almeida D.F."/>
            <person name="Hungria M."/>
            <person name="Guimaraes C.T."/>
            <person name="Antonio R.V."/>
            <person name="Almeida F.C."/>
            <person name="de Almeida L.G.P."/>
            <person name="de Almeida R."/>
            <person name="Alves-Gomes J.A."/>
            <person name="Andrade E.M."/>
            <person name="Araripe J."/>
            <person name="de Araujo M.F.F."/>
            <person name="Astolfi-Filho S."/>
            <person name="Azevedo V."/>
            <person name="Baptista A.J."/>
            <person name="Bataus L.A.M."/>
            <person name="Batista J.S."/>
            <person name="Belo A."/>
            <person name="van den Berg C."/>
            <person name="Bogo M."/>
            <person name="Bonatto S."/>
            <person name="Bordignon J."/>
            <person name="Brigido M.M."/>
            <person name="Brito C.A."/>
            <person name="Brocchi M."/>
            <person name="Burity H.A."/>
            <person name="Camargo A.A."/>
            <person name="Cardoso D.D.P."/>
            <person name="Carneiro N.P."/>
            <person name="Carraro D.M."/>
            <person name="Carvalho C.M.B."/>
            <person name="Cascardo J.C.M."/>
            <person name="Cavada B.S."/>
            <person name="Chueire L.M.O."/>
            <person name="Creczynski-Pasa T.B."/>
            <person name="Cunha-Junior N.C."/>
            <person name="Fagundes N."/>
            <person name="Falcao C.L."/>
            <person name="Fantinatti F."/>
            <person name="Farias I.P."/>
            <person name="Felipe M.S.S."/>
            <person name="Ferrari L.P."/>
            <person name="Ferro J.A."/>
            <person name="Ferro M.I.T."/>
            <person name="Franco G.R."/>
            <person name="Freitas N.S.A."/>
            <person name="Furlan L.R."/>
            <person name="Gazzinelli R.T."/>
            <person name="Gomes E.A."/>
            <person name="Goncalves P.R."/>
            <person name="Grangeiro T.B."/>
            <person name="Grattapaglia D."/>
            <person name="Grisard E.C."/>
            <person name="Hanna E.S."/>
            <person name="Jardim S.N."/>
            <person name="Laurino J."/>
            <person name="Leoi L.C.T."/>
            <person name="Lima L.F.A."/>
            <person name="Loureiro M.F."/>
            <person name="Lyra M.C.C.P."/>
            <person name="Madeira H.M.F."/>
            <person name="Manfio G.P."/>
            <person name="Maranhao A.Q."/>
            <person name="Martins W.S."/>
            <person name="di Mauro S.M.Z."/>
            <person name="de Medeiros S.R.B."/>
            <person name="Meissner R.V."/>
            <person name="Moreira M.A.M."/>
            <person name="Nascimento F.F."/>
            <person name="Nicolas M.F."/>
            <person name="Oliveira J.G."/>
            <person name="Oliveira S.C."/>
            <person name="Paixao R.F.C."/>
            <person name="Parente J.A."/>
            <person name="Pedrosa F.O."/>
            <person name="Pena S.D.J."/>
            <person name="Pereira J.O."/>
            <person name="Pereira M."/>
            <person name="Pinto L.S.R.C."/>
            <person name="Pinto L.S."/>
            <person name="Porto J.I.R."/>
            <person name="Potrich D.P."/>
            <person name="Ramalho-Neto C.E."/>
            <person name="Reis A.M.M."/>
            <person name="Rigo L.U."/>
            <person name="Rondinelli E."/>
            <person name="Santos E.B.P."/>
            <person name="Santos F.R."/>
            <person name="Schneider M.P.C."/>
            <person name="Seuanez H.N."/>
            <person name="Silva A.M.R."/>
            <person name="da Silva A.L.C."/>
            <person name="Silva D.W."/>
            <person name="Silva R."/>
            <person name="Simoes I.C."/>
            <person name="Simon D."/>
            <person name="Soares C.M.A."/>
            <person name="Soares R.B.A."/>
            <person name="Souza E.M."/>
            <person name="Souza K.R.L."/>
            <person name="Souza R.C."/>
            <person name="Steffens M.B.R."/>
            <person name="Steindel M."/>
            <person name="Teixeira S.R."/>
            <person name="Urmenyi T."/>
            <person name="Vettore A."/>
            <person name="Wassem R."/>
            <person name="Zaha A."/>
            <person name="Simpson A.J.G."/>
        </authorList>
    </citation>
    <scope>NUCLEOTIDE SEQUENCE [LARGE SCALE GENOMIC DNA]</scope>
    <source>
        <strain>ATCC 12472 / DSM 30191 / JCM 1249 / CCUG 213 / NBRC 12614 / NCIMB 9131 / NCTC 9757 / MK</strain>
    </source>
</reference>
<sequence>MRLILLGAPGAGKGTQANYIREKFGIPQISTGDMLRAAVKAGTPLGLEAKAIMDAGGLVRDDIIIGLVKERIAQDDCANGFLFDGFPRTIPQAEAMIAAGVDIDYVVEIDVPDAAIVERMAGRRVHLASGRTYHVTFNPPKAAGKDDVTGEDLVQRDDDKEETVKKRLAVYHEQTAVLVGFYGKLAESGSAKAPKYVKIDGTRAVETVRDDVLKALGA</sequence>
<protein>
    <recommendedName>
        <fullName evidence="1">Adenylate kinase</fullName>
        <shortName evidence="1">AK</shortName>
        <ecNumber evidence="1">2.7.4.3</ecNumber>
    </recommendedName>
    <alternativeName>
        <fullName evidence="1">ATP-AMP transphosphorylase</fullName>
    </alternativeName>
    <alternativeName>
        <fullName evidence="1">ATP:AMP phosphotransferase</fullName>
    </alternativeName>
    <alternativeName>
        <fullName evidence="1">Adenylate monophosphate kinase</fullName>
    </alternativeName>
</protein>
<comment type="function">
    <text evidence="1">Catalyzes the reversible transfer of the terminal phosphate group between ATP and AMP. Plays an important role in cellular energy homeostasis and in adenine nucleotide metabolism.</text>
</comment>
<comment type="catalytic activity">
    <reaction evidence="1">
        <text>AMP + ATP = 2 ADP</text>
        <dbReference type="Rhea" id="RHEA:12973"/>
        <dbReference type="ChEBI" id="CHEBI:30616"/>
        <dbReference type="ChEBI" id="CHEBI:456215"/>
        <dbReference type="ChEBI" id="CHEBI:456216"/>
        <dbReference type="EC" id="2.7.4.3"/>
    </reaction>
</comment>
<comment type="pathway">
    <text evidence="1">Purine metabolism; AMP biosynthesis via salvage pathway; AMP from ADP: step 1/1.</text>
</comment>
<comment type="subunit">
    <text evidence="1">Monomer.</text>
</comment>
<comment type="subcellular location">
    <subcellularLocation>
        <location evidence="1">Cytoplasm</location>
    </subcellularLocation>
</comment>
<comment type="domain">
    <text evidence="1">Consists of three domains, a large central CORE domain and two small peripheral domains, NMPbind and LID, which undergo movements during catalysis. The LID domain closes over the site of phosphoryl transfer upon ATP binding. Assembling and dissambling the active center during each catalytic cycle provides an effective means to prevent ATP hydrolysis.</text>
</comment>
<comment type="similarity">
    <text evidence="1">Belongs to the adenylate kinase family.</text>
</comment>
<evidence type="ECO:0000255" key="1">
    <source>
        <dbReference type="HAMAP-Rule" id="MF_00235"/>
    </source>
</evidence>
<accession>Q7NSS7</accession>
<organism>
    <name type="scientific">Chromobacterium violaceum (strain ATCC 12472 / DSM 30191 / JCM 1249 / CCUG 213 / NBRC 12614 / NCIMB 9131 / NCTC 9757 / MK)</name>
    <dbReference type="NCBI Taxonomy" id="243365"/>
    <lineage>
        <taxon>Bacteria</taxon>
        <taxon>Pseudomonadati</taxon>
        <taxon>Pseudomonadota</taxon>
        <taxon>Betaproteobacteria</taxon>
        <taxon>Neisseriales</taxon>
        <taxon>Chromobacteriaceae</taxon>
        <taxon>Chromobacterium</taxon>
    </lineage>
</organism>
<dbReference type="EC" id="2.7.4.3" evidence="1"/>
<dbReference type="EMBL" id="AE016825">
    <property type="protein sequence ID" value="AAQ61007.1"/>
    <property type="molecule type" value="Genomic_DNA"/>
</dbReference>
<dbReference type="RefSeq" id="WP_011136890.1">
    <property type="nucleotide sequence ID" value="NC_005085.1"/>
</dbReference>
<dbReference type="SMR" id="Q7NSS7"/>
<dbReference type="STRING" id="243365.CV_3343"/>
<dbReference type="GeneID" id="66364565"/>
<dbReference type="KEGG" id="cvi:CV_3343"/>
<dbReference type="eggNOG" id="COG0563">
    <property type="taxonomic scope" value="Bacteria"/>
</dbReference>
<dbReference type="HOGENOM" id="CLU_032354_1_2_4"/>
<dbReference type="OrthoDB" id="9805030at2"/>
<dbReference type="UniPathway" id="UPA00588">
    <property type="reaction ID" value="UER00649"/>
</dbReference>
<dbReference type="Proteomes" id="UP000001424">
    <property type="component" value="Chromosome"/>
</dbReference>
<dbReference type="GO" id="GO:0005737">
    <property type="term" value="C:cytoplasm"/>
    <property type="evidence" value="ECO:0007669"/>
    <property type="project" value="UniProtKB-SubCell"/>
</dbReference>
<dbReference type="GO" id="GO:0004017">
    <property type="term" value="F:adenylate kinase activity"/>
    <property type="evidence" value="ECO:0007669"/>
    <property type="project" value="UniProtKB-UniRule"/>
</dbReference>
<dbReference type="GO" id="GO:0005524">
    <property type="term" value="F:ATP binding"/>
    <property type="evidence" value="ECO:0007669"/>
    <property type="project" value="UniProtKB-UniRule"/>
</dbReference>
<dbReference type="GO" id="GO:0044209">
    <property type="term" value="P:AMP salvage"/>
    <property type="evidence" value="ECO:0007669"/>
    <property type="project" value="UniProtKB-UniRule"/>
</dbReference>
<dbReference type="CDD" id="cd01428">
    <property type="entry name" value="ADK"/>
    <property type="match status" value="1"/>
</dbReference>
<dbReference type="FunFam" id="3.40.50.300:FF:000106">
    <property type="entry name" value="Adenylate kinase mitochondrial"/>
    <property type="match status" value="1"/>
</dbReference>
<dbReference type="Gene3D" id="3.40.50.300">
    <property type="entry name" value="P-loop containing nucleotide triphosphate hydrolases"/>
    <property type="match status" value="1"/>
</dbReference>
<dbReference type="HAMAP" id="MF_00235">
    <property type="entry name" value="Adenylate_kinase_Adk"/>
    <property type="match status" value="1"/>
</dbReference>
<dbReference type="InterPro" id="IPR006259">
    <property type="entry name" value="Adenyl_kin_sub"/>
</dbReference>
<dbReference type="InterPro" id="IPR000850">
    <property type="entry name" value="Adenylat/UMP-CMP_kin"/>
</dbReference>
<dbReference type="InterPro" id="IPR033690">
    <property type="entry name" value="Adenylat_kinase_CS"/>
</dbReference>
<dbReference type="InterPro" id="IPR007862">
    <property type="entry name" value="Adenylate_kinase_lid-dom"/>
</dbReference>
<dbReference type="InterPro" id="IPR027417">
    <property type="entry name" value="P-loop_NTPase"/>
</dbReference>
<dbReference type="NCBIfam" id="TIGR01351">
    <property type="entry name" value="adk"/>
    <property type="match status" value="1"/>
</dbReference>
<dbReference type="NCBIfam" id="NF001379">
    <property type="entry name" value="PRK00279.1-1"/>
    <property type="match status" value="1"/>
</dbReference>
<dbReference type="NCBIfam" id="NF001380">
    <property type="entry name" value="PRK00279.1-2"/>
    <property type="match status" value="1"/>
</dbReference>
<dbReference type="NCBIfam" id="NF001381">
    <property type="entry name" value="PRK00279.1-3"/>
    <property type="match status" value="1"/>
</dbReference>
<dbReference type="PANTHER" id="PTHR23359">
    <property type="entry name" value="NUCLEOTIDE KINASE"/>
    <property type="match status" value="1"/>
</dbReference>
<dbReference type="Pfam" id="PF00406">
    <property type="entry name" value="ADK"/>
    <property type="match status" value="1"/>
</dbReference>
<dbReference type="Pfam" id="PF05191">
    <property type="entry name" value="ADK_lid"/>
    <property type="match status" value="1"/>
</dbReference>
<dbReference type="PRINTS" id="PR00094">
    <property type="entry name" value="ADENYLTKNASE"/>
</dbReference>
<dbReference type="SUPFAM" id="SSF52540">
    <property type="entry name" value="P-loop containing nucleoside triphosphate hydrolases"/>
    <property type="match status" value="1"/>
</dbReference>
<dbReference type="PROSITE" id="PS00113">
    <property type="entry name" value="ADENYLATE_KINASE"/>
    <property type="match status" value="1"/>
</dbReference>
<feature type="chain" id="PRO_0000158756" description="Adenylate kinase">
    <location>
        <begin position="1"/>
        <end position="218"/>
    </location>
</feature>
<feature type="region of interest" description="NMP" evidence="1">
    <location>
        <begin position="30"/>
        <end position="59"/>
    </location>
</feature>
<feature type="region of interest" description="LID" evidence="1">
    <location>
        <begin position="122"/>
        <end position="159"/>
    </location>
</feature>
<feature type="binding site" evidence="1">
    <location>
        <begin position="10"/>
        <end position="15"/>
    </location>
    <ligand>
        <name>ATP</name>
        <dbReference type="ChEBI" id="CHEBI:30616"/>
    </ligand>
</feature>
<feature type="binding site" evidence="1">
    <location>
        <position position="31"/>
    </location>
    <ligand>
        <name>AMP</name>
        <dbReference type="ChEBI" id="CHEBI:456215"/>
    </ligand>
</feature>
<feature type="binding site" evidence="1">
    <location>
        <position position="36"/>
    </location>
    <ligand>
        <name>AMP</name>
        <dbReference type="ChEBI" id="CHEBI:456215"/>
    </ligand>
</feature>
<feature type="binding site" evidence="1">
    <location>
        <begin position="57"/>
        <end position="59"/>
    </location>
    <ligand>
        <name>AMP</name>
        <dbReference type="ChEBI" id="CHEBI:456215"/>
    </ligand>
</feature>
<feature type="binding site" evidence="1">
    <location>
        <begin position="85"/>
        <end position="88"/>
    </location>
    <ligand>
        <name>AMP</name>
        <dbReference type="ChEBI" id="CHEBI:456215"/>
    </ligand>
</feature>
<feature type="binding site" evidence="1">
    <location>
        <position position="92"/>
    </location>
    <ligand>
        <name>AMP</name>
        <dbReference type="ChEBI" id="CHEBI:456215"/>
    </ligand>
</feature>
<feature type="binding site" evidence="1">
    <location>
        <position position="123"/>
    </location>
    <ligand>
        <name>ATP</name>
        <dbReference type="ChEBI" id="CHEBI:30616"/>
    </ligand>
</feature>
<feature type="binding site" evidence="1">
    <location>
        <begin position="132"/>
        <end position="133"/>
    </location>
    <ligand>
        <name>ATP</name>
        <dbReference type="ChEBI" id="CHEBI:30616"/>
    </ligand>
</feature>
<feature type="binding site" evidence="1">
    <location>
        <position position="156"/>
    </location>
    <ligand>
        <name>AMP</name>
        <dbReference type="ChEBI" id="CHEBI:456215"/>
    </ligand>
</feature>
<feature type="binding site" evidence="1">
    <location>
        <position position="167"/>
    </location>
    <ligand>
        <name>AMP</name>
        <dbReference type="ChEBI" id="CHEBI:456215"/>
    </ligand>
</feature>
<feature type="binding site" evidence="1">
    <location>
        <position position="203"/>
    </location>
    <ligand>
        <name>ATP</name>
        <dbReference type="ChEBI" id="CHEBI:30616"/>
    </ligand>
</feature>
<keyword id="KW-0067">ATP-binding</keyword>
<keyword id="KW-0963">Cytoplasm</keyword>
<keyword id="KW-0418">Kinase</keyword>
<keyword id="KW-0545">Nucleotide biosynthesis</keyword>
<keyword id="KW-0547">Nucleotide-binding</keyword>
<keyword id="KW-1185">Reference proteome</keyword>
<keyword id="KW-0808">Transferase</keyword>
<proteinExistence type="inferred from homology"/>
<name>KAD_CHRVO</name>
<gene>
    <name evidence="1" type="primary">adk</name>
    <name type="ordered locus">CV_3343</name>
</gene>